<reference key="1">
    <citation type="submission" date="2005-12" db="EMBL/GenBank/DDBJ databases">
        <authorList>
            <person name="Moran M.A."/>
            <person name="Ferriera S."/>
            <person name="Johnson J."/>
            <person name="Kravitz S."/>
            <person name="Halpern A."/>
            <person name="Remington K."/>
            <person name="Beeson K."/>
            <person name="Tran B."/>
            <person name="Rogers Y.-H."/>
            <person name="Friedman R."/>
            <person name="Venter J.C."/>
        </authorList>
    </citation>
    <scope>NUCLEOTIDE SEQUENCE [LARGE SCALE GENOMIC DNA]</scope>
    <source>
        <strain>ATCC BAA-591 / DSM 15170 / ISM</strain>
    </source>
</reference>
<reference key="2">
    <citation type="journal article" date="2017" name="Green Chem.">
        <title>Expanding the reaction space of aldolases using hydroxypyruvate as a nucleophilic substrate.</title>
        <authorList>
            <person name="de Berardinis V."/>
            <person name="Guerard-Helaine C."/>
            <person name="Darii E."/>
            <person name="Bastard K."/>
            <person name="Helaine V."/>
            <person name="Mariage A."/>
            <person name="Petit J.-L."/>
            <person name="Poupard N."/>
            <person name="Sanchez-Moreno I."/>
            <person name="Stam M."/>
            <person name="Gefflaut T."/>
            <person name="Salanoubat M."/>
            <person name="Lemaire M."/>
        </authorList>
    </citation>
    <scope>FUNCTION</scope>
    <scope>CATALYTIC ACTIVITY</scope>
</reference>
<keyword id="KW-0456">Lyase</keyword>
<keyword id="KW-0479">Metal-binding</keyword>
<keyword id="KW-0670">Pyruvate</keyword>
<keyword id="KW-1185">Reference proteome</keyword>
<accession>A3SLS0</accession>
<dbReference type="EC" id="4.1.2.-" evidence="2"/>
<dbReference type="EMBL" id="AALY01000001">
    <property type="protein sequence ID" value="EAP78301.1"/>
    <property type="molecule type" value="Genomic_DNA"/>
</dbReference>
<dbReference type="RefSeq" id="WP_009813701.1">
    <property type="nucleotide sequence ID" value="NZ_CH724156.1"/>
</dbReference>
<dbReference type="SMR" id="A3SLS0"/>
<dbReference type="STRING" id="89187.ISM_08390"/>
<dbReference type="eggNOG" id="COG3836">
    <property type="taxonomic scope" value="Bacteria"/>
</dbReference>
<dbReference type="HOGENOM" id="CLU_059964_1_0_5"/>
<dbReference type="OrthoDB" id="9802624at2"/>
<dbReference type="Proteomes" id="UP000005954">
    <property type="component" value="Unassembled WGS sequence"/>
</dbReference>
<dbReference type="GO" id="GO:0005737">
    <property type="term" value="C:cytoplasm"/>
    <property type="evidence" value="ECO:0007669"/>
    <property type="project" value="TreeGrafter"/>
</dbReference>
<dbReference type="GO" id="GO:0016832">
    <property type="term" value="F:aldehyde-lyase activity"/>
    <property type="evidence" value="ECO:0007669"/>
    <property type="project" value="TreeGrafter"/>
</dbReference>
<dbReference type="GO" id="GO:0046872">
    <property type="term" value="F:metal ion binding"/>
    <property type="evidence" value="ECO:0007669"/>
    <property type="project" value="UniProtKB-KW"/>
</dbReference>
<dbReference type="FunFam" id="3.20.20.60:FF:000004">
    <property type="entry name" value="5-keto-4-deoxy-D-glucarate aldolase"/>
    <property type="match status" value="1"/>
</dbReference>
<dbReference type="Gene3D" id="3.20.20.60">
    <property type="entry name" value="Phosphoenolpyruvate-binding domains"/>
    <property type="match status" value="1"/>
</dbReference>
<dbReference type="InterPro" id="IPR005000">
    <property type="entry name" value="Aldolase/citrate-lyase_domain"/>
</dbReference>
<dbReference type="InterPro" id="IPR050251">
    <property type="entry name" value="HpcH-HpaI_aldolase"/>
</dbReference>
<dbReference type="InterPro" id="IPR015813">
    <property type="entry name" value="Pyrv/PenolPyrv_kinase-like_dom"/>
</dbReference>
<dbReference type="InterPro" id="IPR040442">
    <property type="entry name" value="Pyrv_kinase-like_dom_sf"/>
</dbReference>
<dbReference type="PANTHER" id="PTHR30502">
    <property type="entry name" value="2-KETO-3-DEOXY-L-RHAMNONATE ALDOLASE"/>
    <property type="match status" value="1"/>
</dbReference>
<dbReference type="PANTHER" id="PTHR30502:SF4">
    <property type="entry name" value="5-KETO-4-DEOXY-D-GLUCARATE ALDOLASE"/>
    <property type="match status" value="1"/>
</dbReference>
<dbReference type="Pfam" id="PF03328">
    <property type="entry name" value="HpcH_HpaI"/>
    <property type="match status" value="1"/>
</dbReference>
<dbReference type="SUPFAM" id="SSF51621">
    <property type="entry name" value="Phosphoenolpyruvate/pyruvate domain"/>
    <property type="match status" value="1"/>
</dbReference>
<organism>
    <name type="scientific">Roseovarius nubinhibens (strain ATCC BAA-591 / DSM 15170 / ISM)</name>
    <dbReference type="NCBI Taxonomy" id="89187"/>
    <lineage>
        <taxon>Bacteria</taxon>
        <taxon>Pseudomonadati</taxon>
        <taxon>Pseudomonadota</taxon>
        <taxon>Alphaproteobacteria</taxon>
        <taxon>Rhodobacterales</taxon>
        <taxon>Roseobacteraceae</taxon>
        <taxon>Roseovarius</taxon>
    </lineage>
</organism>
<comment type="function">
    <text evidence="2">Aldolase which can catalyze in vitro the aldolisation reaction between hydroxypyruvate (HPA) or pyruvate (PA) and D-glyceraldehyde (D-GA) (Ref.2). The condensation of hydroxypyruvate and D-glyceraldehyde produces 2-dehydro-D-gluconate as the major product (Ref.2). The condensation of pyruvate and D-glyceraldehyde produces 2-dehydro-3-deoxy-L-galactonate as the major product and 2-dehydro-3-deoxy-D-gluconate (Ref.2).</text>
</comment>
<comment type="catalytic activity">
    <reaction evidence="2">
        <text>D-glyceraldehyde + 3-hydroxypyruvate = 2-dehydro-D-gluconate</text>
        <dbReference type="Rhea" id="RHEA:80043"/>
        <dbReference type="ChEBI" id="CHEBI:16808"/>
        <dbReference type="ChEBI" id="CHEBI:17180"/>
        <dbReference type="ChEBI" id="CHEBI:17378"/>
    </reaction>
</comment>
<comment type="catalytic activity">
    <reaction evidence="2">
        <text>D-glyceraldehyde + pyruvate = 2-dehydro-3-deoxy-L-galactonate</text>
        <dbReference type="Rhea" id="RHEA:80055"/>
        <dbReference type="ChEBI" id="CHEBI:15361"/>
        <dbReference type="ChEBI" id="CHEBI:17378"/>
        <dbReference type="ChEBI" id="CHEBI:75545"/>
    </reaction>
</comment>
<comment type="catalytic activity">
    <reaction evidence="2">
        <text>2-dehydro-3-deoxy-D-gluconate = D-glyceraldehyde + pyruvate</text>
        <dbReference type="Rhea" id="RHEA:35583"/>
        <dbReference type="ChEBI" id="CHEBI:15361"/>
        <dbReference type="ChEBI" id="CHEBI:17378"/>
        <dbReference type="ChEBI" id="CHEBI:57990"/>
    </reaction>
</comment>
<comment type="cofactor">
    <cofactor evidence="1">
        <name>a divalent metal cation</name>
        <dbReference type="ChEBI" id="CHEBI:60240"/>
    </cofactor>
</comment>
<comment type="similarity">
    <text evidence="4">Belongs to the HpcH/HpaI aldolase family.</text>
</comment>
<evidence type="ECO:0000250" key="1">
    <source>
        <dbReference type="UniProtKB" id="Q47098"/>
    </source>
</evidence>
<evidence type="ECO:0000269" key="2">
    <source ref="2"/>
</evidence>
<evidence type="ECO:0000303" key="3">
    <source ref="2"/>
</evidence>
<evidence type="ECO:0000305" key="4"/>
<evidence type="ECO:0000312" key="5">
    <source>
        <dbReference type="EMBL" id="EAP78301.1"/>
    </source>
</evidence>
<protein>
    <recommendedName>
        <fullName evidence="3">Hydroxypyruvate/pyruvate aldolase</fullName>
        <shortName evidence="3">HPA/PA aldolase</shortName>
        <ecNumber evidence="2">4.1.2.-</ecNumber>
    </recommendedName>
</protein>
<name>HPAAL_ROSNI</name>
<feature type="chain" id="PRO_0000460958" description="Hydroxypyruvate/pyruvate aldolase">
    <location>
        <begin position="1"/>
        <end position="257"/>
    </location>
</feature>
<feature type="active site" description="Proton acceptor" evidence="1">
    <location>
        <position position="48"/>
    </location>
</feature>
<feature type="binding site" evidence="1">
    <location>
        <position position="152"/>
    </location>
    <ligand>
        <name>a divalent metal cation</name>
        <dbReference type="ChEBI" id="CHEBI:60240"/>
    </ligand>
</feature>
<feature type="binding site" evidence="1">
    <location>
        <position position="178"/>
    </location>
    <ligand>
        <name>a divalent metal cation</name>
        <dbReference type="ChEBI" id="CHEBI:60240"/>
    </ligand>
</feature>
<feature type="site" description="Transition state stabilizer" evidence="1">
    <location>
        <position position="73"/>
    </location>
</feature>
<feature type="site" description="Increases basicity of active site His" evidence="1">
    <location>
        <position position="87"/>
    </location>
</feature>
<proteinExistence type="evidence at protein level"/>
<gene>
    <name evidence="5" type="ORF">ISM_08390</name>
</gene>
<sequence length="257" mass="27418">MPAPTNTFKSALASGDLLLGCWAGFADPYATEVLATAGYDWLVIDGEHAPNDLRSISAQLAVLRGQHSHPVVRLPMGEPWLIKQVLDAGAQTLLIPMVESAEEARDLVRAMRYPPDGIRGSGAALARASHFADIPDYIATANDQMCLLVQVETRAGIDALDEILAVDGVDGVFIGPSDLAADMGHMGDASQADVAETIEDALARIRTAGRAAGILALDDATIRRYRDWGANFLAVGIDVVMLAQTARQTLAKWRTDD</sequence>